<name>HDHD3_XENTR</name>
<reference key="1">
    <citation type="submission" date="2006-09" db="EMBL/GenBank/DDBJ databases">
        <authorList>
            <consortium name="NIH - Xenopus Gene Collection (XGC) project"/>
        </authorList>
    </citation>
    <scope>NUCLEOTIDE SEQUENCE [LARGE SCALE MRNA]</scope>
    <source>
        <strain>N6</strain>
        <tissue>Oviduct</tissue>
    </source>
</reference>
<comment type="similarity">
    <text evidence="1">Belongs to the HAD-like hydrolase superfamily.</text>
</comment>
<feature type="chain" id="PRO_0000287317" description="Haloacid dehalogenase-like hydrolase domain-containing protein 3">
    <location>
        <begin position="1"/>
        <end position="189"/>
    </location>
</feature>
<evidence type="ECO:0000305" key="1"/>
<dbReference type="EMBL" id="BC124032">
    <property type="protein sequence ID" value="AAI24033.1"/>
    <property type="molecule type" value="mRNA"/>
</dbReference>
<dbReference type="RefSeq" id="NP_001072693.1">
    <property type="nucleotide sequence ID" value="NM_001079225.1"/>
</dbReference>
<dbReference type="SMR" id="Q08CY5"/>
<dbReference type="FunCoup" id="Q08CY5">
    <property type="interactions" value="1011"/>
</dbReference>
<dbReference type="STRING" id="8364.ENSXETP00000014205"/>
<dbReference type="PaxDb" id="8364-ENSXETP00000050681"/>
<dbReference type="GeneID" id="780150"/>
<dbReference type="KEGG" id="xtr:780150"/>
<dbReference type="AGR" id="Xenbase:XB-GENE-969463"/>
<dbReference type="CTD" id="81932"/>
<dbReference type="Xenbase" id="XB-GENE-969463">
    <property type="gene designation" value="hdhd3"/>
</dbReference>
<dbReference type="InParanoid" id="Q08CY5"/>
<dbReference type="OrthoDB" id="444127at2759"/>
<dbReference type="Proteomes" id="UP000008143">
    <property type="component" value="Chromosome 8"/>
</dbReference>
<dbReference type="Gene3D" id="3.40.50.1000">
    <property type="entry name" value="HAD superfamily/HAD-like"/>
    <property type="match status" value="1"/>
</dbReference>
<dbReference type="Gene3D" id="1.10.150.720">
    <property type="entry name" value="Haloacid dehalogenase-like hydrolase"/>
    <property type="match status" value="1"/>
</dbReference>
<dbReference type="InterPro" id="IPR051828">
    <property type="entry name" value="HAD-like_hydrolase_domain"/>
</dbReference>
<dbReference type="InterPro" id="IPR036412">
    <property type="entry name" value="HAD-like_sf"/>
</dbReference>
<dbReference type="InterPro" id="IPR044924">
    <property type="entry name" value="HAD-SF_hydro_IA_REG-2-like_cap"/>
</dbReference>
<dbReference type="InterPro" id="IPR023214">
    <property type="entry name" value="HAD_sf"/>
</dbReference>
<dbReference type="PANTHER" id="PTHR46191">
    <property type="match status" value="1"/>
</dbReference>
<dbReference type="PANTHER" id="PTHR46191:SF2">
    <property type="entry name" value="HALOACID DEHALOGENASE-LIKE HYDROLASE DOMAIN-CONTAINING PROTEIN 3"/>
    <property type="match status" value="1"/>
</dbReference>
<dbReference type="Pfam" id="PF00702">
    <property type="entry name" value="Hydrolase"/>
    <property type="match status" value="1"/>
</dbReference>
<dbReference type="SUPFAM" id="SSF56784">
    <property type="entry name" value="HAD-like"/>
    <property type="match status" value="1"/>
</dbReference>
<accession>Q08CY5</accession>
<organism>
    <name type="scientific">Xenopus tropicalis</name>
    <name type="common">Western clawed frog</name>
    <name type="synonym">Silurana tropicalis</name>
    <dbReference type="NCBI Taxonomy" id="8364"/>
    <lineage>
        <taxon>Eukaryota</taxon>
        <taxon>Metazoa</taxon>
        <taxon>Chordata</taxon>
        <taxon>Craniata</taxon>
        <taxon>Vertebrata</taxon>
        <taxon>Euteleostomi</taxon>
        <taxon>Amphibia</taxon>
        <taxon>Batrachia</taxon>
        <taxon>Anura</taxon>
        <taxon>Pipoidea</taxon>
        <taxon>Pipidae</taxon>
        <taxon>Xenopodinae</taxon>
        <taxon>Xenopus</taxon>
        <taxon>Silurana</taxon>
    </lineage>
</organism>
<proteinExistence type="evidence at transcript level"/>
<keyword id="KW-1185">Reference proteome</keyword>
<sequence length="189" mass="21254">MSLRLITWDIKDTLLRVRVPVGQQYFAEAKRQGLCMDPGSLETSFRNAYRTHSRLFPNYGLAQGMDSRQWWLDVVLQTFRLSGAEDDETVRSVAQQLYQDFSTARNWAVVPGAREALDSCKGLGLKMAVISNFDRRLEEQPMKDEPAADHMGYKRYPAASPGAGGAAVFCRSQEARSLYGPRFLGDIVP</sequence>
<gene>
    <name type="primary">hdhd3</name>
</gene>
<protein>
    <recommendedName>
        <fullName>Haloacid dehalogenase-like hydrolase domain-containing protein 3</fullName>
    </recommendedName>
</protein>